<proteinExistence type="inferred from homology"/>
<sequence>MFIYYCKECSIMNKQQSKVRYSIRKVSIGILSISIGMFLALGMSNKAYADEIDKSKDFTRGYEQNVFAKSELNANKNTTKDKIKNEGAVKTSDTSLKLDNKSAISNGNEINQDIKISNTPKNSSQGNNLVINNNEPTKEIKIANLEAQNSNQKKTNKVTNNYFGYYSFREAPKTQIYTVKKGDTLSAIALKYKTTVSNIQNTNNIANPNLIFIGQKLKVPMTPLVEPKPKTVSSNNKSNSNSSTLNYLKTLENRGWDFDGSYGWQCFDLVNVYWNHLYGHGLKGYGAKDIPYANNFNSEAKIYHNTPTFKAEPGDLVVFSGRFGGGYGHTAIVLNGDYDGKLMKFQSLDQNWNNGGWRKAEVAHKVVHNYENDMIFIRPFKKA</sequence>
<feature type="signal peptide" evidence="2">
    <location>
        <begin position="1"/>
        <end position="49"/>
    </location>
</feature>
<feature type="chain" id="PRO_0000227562" description="Probable cell wall hydrolase LytN">
    <location>
        <begin position="50"/>
        <end position="383"/>
    </location>
</feature>
<feature type="domain" description="LysM" evidence="4">
    <location>
        <begin position="175"/>
        <end position="219"/>
    </location>
</feature>
<feature type="domain" description="Peptidase C51" evidence="3">
    <location>
        <begin position="241"/>
        <end position="378"/>
    </location>
</feature>
<organism>
    <name type="scientific">Staphylococcus aureus (strain Mu50 / ATCC 700699)</name>
    <dbReference type="NCBI Taxonomy" id="158878"/>
    <lineage>
        <taxon>Bacteria</taxon>
        <taxon>Bacillati</taxon>
        <taxon>Bacillota</taxon>
        <taxon>Bacilli</taxon>
        <taxon>Bacillales</taxon>
        <taxon>Staphylococcaceae</taxon>
        <taxon>Staphylococcus</taxon>
    </lineage>
</organism>
<name>LYTN_STAAM</name>
<keyword id="KW-0961">Cell wall biogenesis/degradation</keyword>
<keyword id="KW-0378">Hydrolase</keyword>
<keyword id="KW-0964">Secreted</keyword>
<keyword id="KW-0732">Signal</keyword>
<dbReference type="EC" id="3.-.-.-"/>
<dbReference type="EMBL" id="BA000017">
    <property type="protein sequence ID" value="BAB57409.1"/>
    <property type="status" value="ALT_INIT"/>
    <property type="molecule type" value="Genomic_DNA"/>
</dbReference>
<dbReference type="SMR" id="Q99UM3"/>
<dbReference type="CAZy" id="CBM50">
    <property type="family name" value="Carbohydrate-Binding Module Family 50"/>
</dbReference>
<dbReference type="KEGG" id="sav:SAV1247"/>
<dbReference type="HOGENOM" id="CLU_060961_0_0_9"/>
<dbReference type="Proteomes" id="UP000002481">
    <property type="component" value="Chromosome"/>
</dbReference>
<dbReference type="GO" id="GO:0005576">
    <property type="term" value="C:extracellular region"/>
    <property type="evidence" value="ECO:0007669"/>
    <property type="project" value="UniProtKB-SubCell"/>
</dbReference>
<dbReference type="GO" id="GO:0016787">
    <property type="term" value="F:hydrolase activity"/>
    <property type="evidence" value="ECO:0007669"/>
    <property type="project" value="UniProtKB-KW"/>
</dbReference>
<dbReference type="GO" id="GO:0008932">
    <property type="term" value="F:lytic endotransglycosylase activity"/>
    <property type="evidence" value="ECO:0007669"/>
    <property type="project" value="TreeGrafter"/>
</dbReference>
<dbReference type="GO" id="GO:0071555">
    <property type="term" value="P:cell wall organization"/>
    <property type="evidence" value="ECO:0007669"/>
    <property type="project" value="UniProtKB-KW"/>
</dbReference>
<dbReference type="CDD" id="cd00118">
    <property type="entry name" value="LysM"/>
    <property type="match status" value="1"/>
</dbReference>
<dbReference type="FunFam" id="3.10.350.10:FF:000021">
    <property type="entry name" value="Probable cell wall hydrolase LytN"/>
    <property type="match status" value="1"/>
</dbReference>
<dbReference type="FunFam" id="3.90.1720.10:FF:000015">
    <property type="entry name" value="Probable cell wall hydrolase LytN"/>
    <property type="match status" value="1"/>
</dbReference>
<dbReference type="Gene3D" id="3.90.1720.10">
    <property type="entry name" value="endopeptidase domain like (from Nostoc punctiforme)"/>
    <property type="match status" value="1"/>
</dbReference>
<dbReference type="Gene3D" id="3.10.350.10">
    <property type="entry name" value="LysM domain"/>
    <property type="match status" value="1"/>
</dbReference>
<dbReference type="InterPro" id="IPR007921">
    <property type="entry name" value="CHAP_dom"/>
</dbReference>
<dbReference type="InterPro" id="IPR018392">
    <property type="entry name" value="LysM_dom"/>
</dbReference>
<dbReference type="InterPro" id="IPR036779">
    <property type="entry name" value="LysM_dom_sf"/>
</dbReference>
<dbReference type="InterPro" id="IPR038765">
    <property type="entry name" value="Papain-like_cys_pep_sf"/>
</dbReference>
<dbReference type="InterPro" id="IPR005877">
    <property type="entry name" value="YSIRK_signal_dom"/>
</dbReference>
<dbReference type="NCBIfam" id="TIGR01168">
    <property type="entry name" value="YSIRK_signal"/>
    <property type="match status" value="1"/>
</dbReference>
<dbReference type="PANTHER" id="PTHR33734">
    <property type="entry name" value="LYSM DOMAIN-CONTAINING GPI-ANCHORED PROTEIN 2"/>
    <property type="match status" value="1"/>
</dbReference>
<dbReference type="PANTHER" id="PTHR33734:SF22">
    <property type="entry name" value="MEMBRANE-BOUND LYTIC MUREIN TRANSGLYCOSYLASE D"/>
    <property type="match status" value="1"/>
</dbReference>
<dbReference type="Pfam" id="PF05257">
    <property type="entry name" value="CHAP"/>
    <property type="match status" value="1"/>
</dbReference>
<dbReference type="Pfam" id="PF01476">
    <property type="entry name" value="LysM"/>
    <property type="match status" value="1"/>
</dbReference>
<dbReference type="SMART" id="SM00257">
    <property type="entry name" value="LysM"/>
    <property type="match status" value="1"/>
</dbReference>
<dbReference type="SUPFAM" id="SSF54001">
    <property type="entry name" value="Cysteine proteinases"/>
    <property type="match status" value="1"/>
</dbReference>
<dbReference type="SUPFAM" id="SSF54106">
    <property type="entry name" value="LysM domain"/>
    <property type="match status" value="1"/>
</dbReference>
<dbReference type="PROSITE" id="PS50911">
    <property type="entry name" value="CHAP"/>
    <property type="match status" value="1"/>
</dbReference>
<dbReference type="PROSITE" id="PS51782">
    <property type="entry name" value="LYSM"/>
    <property type="match status" value="1"/>
</dbReference>
<reference key="1">
    <citation type="journal article" date="2001" name="Lancet">
        <title>Whole genome sequencing of meticillin-resistant Staphylococcus aureus.</title>
        <authorList>
            <person name="Kuroda M."/>
            <person name="Ohta T."/>
            <person name="Uchiyama I."/>
            <person name="Baba T."/>
            <person name="Yuzawa H."/>
            <person name="Kobayashi I."/>
            <person name="Cui L."/>
            <person name="Oguchi A."/>
            <person name="Aoki K."/>
            <person name="Nagai Y."/>
            <person name="Lian J.-Q."/>
            <person name="Ito T."/>
            <person name="Kanamori M."/>
            <person name="Matsumaru H."/>
            <person name="Maruyama A."/>
            <person name="Murakami H."/>
            <person name="Hosoyama A."/>
            <person name="Mizutani-Ui Y."/>
            <person name="Takahashi N.K."/>
            <person name="Sawano T."/>
            <person name="Inoue R."/>
            <person name="Kaito C."/>
            <person name="Sekimizu K."/>
            <person name="Hirakawa H."/>
            <person name="Kuhara S."/>
            <person name="Goto S."/>
            <person name="Yabuzaki J."/>
            <person name="Kanehisa M."/>
            <person name="Yamashita A."/>
            <person name="Oshima K."/>
            <person name="Furuya K."/>
            <person name="Yoshino C."/>
            <person name="Shiba T."/>
            <person name="Hattori M."/>
            <person name="Ogasawara N."/>
            <person name="Hayashi H."/>
            <person name="Hiramatsu K."/>
        </authorList>
    </citation>
    <scope>NUCLEOTIDE SEQUENCE [LARGE SCALE GENOMIC DNA]</scope>
    <source>
        <strain>Mu50 / ATCC 700699</strain>
    </source>
</reference>
<evidence type="ECO:0000250" key="1"/>
<evidence type="ECO:0000255" key="2"/>
<evidence type="ECO:0000255" key="3">
    <source>
        <dbReference type="PROSITE-ProRule" id="PRU00048"/>
    </source>
</evidence>
<evidence type="ECO:0000255" key="4">
    <source>
        <dbReference type="PROSITE-ProRule" id="PRU01118"/>
    </source>
</evidence>
<evidence type="ECO:0000305" key="5"/>
<accession>Q99UM3</accession>
<gene>
    <name type="primary">lytN</name>
    <name type="ordered locus">SAV1247</name>
</gene>
<protein>
    <recommendedName>
        <fullName>Probable cell wall hydrolase LytN</fullName>
        <ecNumber>3.-.-.-</ecNumber>
    </recommendedName>
</protein>
<comment type="function">
    <text evidence="1">Probably involved in peptidoglycan hydrolysis.</text>
</comment>
<comment type="subcellular location">
    <subcellularLocation>
        <location evidence="5">Secreted</location>
    </subcellularLocation>
</comment>
<comment type="sequence caution" evidence="5">
    <conflict type="erroneous initiation">
        <sequence resource="EMBL-CDS" id="BAB57409"/>
    </conflict>
</comment>